<evidence type="ECO:0000255" key="1">
    <source>
        <dbReference type="HAMAP-Rule" id="MF_00267"/>
    </source>
</evidence>
<sequence>MSKPSLELKGASFTLSVLHINSSDLQAVMTELDSKLAQAPQFFLGAPLVVNLSAIQHDSLNLSALKDLLISRQLVIVGITGATTVLSKQAKDLGLAIVKAGKQSSTPPPAPRQTKIVKQNIRSGQQVYAKNGDLIIFGAVGNGAEVIADGSIHIYGALRGKAMAGAAGDTSAVIIAHSLEAELVSIAGQYWLAENLQQHSSDKSGCIRLDGESLMVESLPL</sequence>
<keyword id="KW-0131">Cell cycle</keyword>
<keyword id="KW-0132">Cell division</keyword>
<keyword id="KW-1185">Reference proteome</keyword>
<keyword id="KW-0717">Septation</keyword>
<comment type="function">
    <text evidence="1">Cell division inhibitor that blocks the formation of polar Z ring septums. Rapidly oscillates between the poles of the cell to destabilize FtsZ filaments that have formed before they mature into polar Z rings. Prevents FtsZ polymerization.</text>
</comment>
<comment type="subunit">
    <text evidence="1">Interacts with MinD and FtsZ.</text>
</comment>
<comment type="similarity">
    <text evidence="1">Belongs to the MinC family.</text>
</comment>
<protein>
    <recommendedName>
        <fullName evidence="1">Probable septum site-determining protein MinC</fullName>
    </recommendedName>
</protein>
<proteinExistence type="inferred from homology"/>
<gene>
    <name evidence="1" type="primary">minC</name>
    <name type="ordered locus">Sbal_1868</name>
</gene>
<feature type="chain" id="PRO_1000047855" description="Probable septum site-determining protein MinC">
    <location>
        <begin position="1"/>
        <end position="221"/>
    </location>
</feature>
<organism>
    <name type="scientific">Shewanella baltica (strain OS155 / ATCC BAA-1091)</name>
    <dbReference type="NCBI Taxonomy" id="325240"/>
    <lineage>
        <taxon>Bacteria</taxon>
        <taxon>Pseudomonadati</taxon>
        <taxon>Pseudomonadota</taxon>
        <taxon>Gammaproteobacteria</taxon>
        <taxon>Alteromonadales</taxon>
        <taxon>Shewanellaceae</taxon>
        <taxon>Shewanella</taxon>
    </lineage>
</organism>
<accession>A3D3R1</accession>
<name>MINC_SHEB5</name>
<reference key="1">
    <citation type="submission" date="2007-02" db="EMBL/GenBank/DDBJ databases">
        <title>Complete sequence of chromosome of Shewanella baltica OS155.</title>
        <authorList>
            <consortium name="US DOE Joint Genome Institute"/>
            <person name="Copeland A."/>
            <person name="Lucas S."/>
            <person name="Lapidus A."/>
            <person name="Barry K."/>
            <person name="Detter J.C."/>
            <person name="Glavina del Rio T."/>
            <person name="Hammon N."/>
            <person name="Israni S."/>
            <person name="Dalin E."/>
            <person name="Tice H."/>
            <person name="Pitluck S."/>
            <person name="Sims D.R."/>
            <person name="Brettin T."/>
            <person name="Bruce D."/>
            <person name="Han C."/>
            <person name="Tapia R."/>
            <person name="Brainard J."/>
            <person name="Schmutz J."/>
            <person name="Larimer F."/>
            <person name="Land M."/>
            <person name="Hauser L."/>
            <person name="Kyrpides N."/>
            <person name="Mikhailova N."/>
            <person name="Brettar I."/>
            <person name="Klappenbach J."/>
            <person name="Konstantinidis K."/>
            <person name="Rodrigues J."/>
            <person name="Tiedje J."/>
            <person name="Richardson P."/>
        </authorList>
    </citation>
    <scope>NUCLEOTIDE SEQUENCE [LARGE SCALE GENOMIC DNA]</scope>
    <source>
        <strain>OS155 / ATCC BAA-1091</strain>
    </source>
</reference>
<dbReference type="EMBL" id="CP000563">
    <property type="protein sequence ID" value="ABN61374.1"/>
    <property type="molecule type" value="Genomic_DNA"/>
</dbReference>
<dbReference type="RefSeq" id="WP_006081363.1">
    <property type="nucleotide sequence ID" value="NC_009052.1"/>
</dbReference>
<dbReference type="SMR" id="A3D3R1"/>
<dbReference type="STRING" id="325240.Sbal_1868"/>
<dbReference type="GeneID" id="11772108"/>
<dbReference type="KEGG" id="sbl:Sbal_1868"/>
<dbReference type="HOGENOM" id="CLU_067812_0_1_6"/>
<dbReference type="OrthoDB" id="9794530at2"/>
<dbReference type="Proteomes" id="UP000001557">
    <property type="component" value="Chromosome"/>
</dbReference>
<dbReference type="GO" id="GO:0000902">
    <property type="term" value="P:cell morphogenesis"/>
    <property type="evidence" value="ECO:0007669"/>
    <property type="project" value="InterPro"/>
</dbReference>
<dbReference type="GO" id="GO:0000917">
    <property type="term" value="P:division septum assembly"/>
    <property type="evidence" value="ECO:0007669"/>
    <property type="project" value="UniProtKB-KW"/>
</dbReference>
<dbReference type="GO" id="GO:0051302">
    <property type="term" value="P:regulation of cell division"/>
    <property type="evidence" value="ECO:0007669"/>
    <property type="project" value="InterPro"/>
</dbReference>
<dbReference type="GO" id="GO:1901891">
    <property type="term" value="P:regulation of cell septum assembly"/>
    <property type="evidence" value="ECO:0007669"/>
    <property type="project" value="InterPro"/>
</dbReference>
<dbReference type="Gene3D" id="2.160.20.70">
    <property type="match status" value="1"/>
</dbReference>
<dbReference type="Gene3D" id="3.30.70.260">
    <property type="match status" value="1"/>
</dbReference>
<dbReference type="HAMAP" id="MF_00267">
    <property type="entry name" value="MinC"/>
    <property type="match status" value="1"/>
</dbReference>
<dbReference type="InterPro" id="IPR016098">
    <property type="entry name" value="CAP/MinC_C"/>
</dbReference>
<dbReference type="InterPro" id="IPR013033">
    <property type="entry name" value="MinC"/>
</dbReference>
<dbReference type="InterPro" id="IPR036145">
    <property type="entry name" value="MinC_C_sf"/>
</dbReference>
<dbReference type="InterPro" id="IPR007874">
    <property type="entry name" value="MinC_N"/>
</dbReference>
<dbReference type="InterPro" id="IPR005526">
    <property type="entry name" value="Septum_form_inhib_MinC_C"/>
</dbReference>
<dbReference type="NCBIfam" id="TIGR01222">
    <property type="entry name" value="minC"/>
    <property type="match status" value="1"/>
</dbReference>
<dbReference type="PANTHER" id="PTHR34108">
    <property type="entry name" value="SEPTUM SITE-DETERMINING PROTEIN MINC"/>
    <property type="match status" value="1"/>
</dbReference>
<dbReference type="PANTHER" id="PTHR34108:SF1">
    <property type="entry name" value="SEPTUM SITE-DETERMINING PROTEIN MINC"/>
    <property type="match status" value="1"/>
</dbReference>
<dbReference type="Pfam" id="PF03775">
    <property type="entry name" value="MinC_C"/>
    <property type="match status" value="1"/>
</dbReference>
<dbReference type="Pfam" id="PF05209">
    <property type="entry name" value="MinC_N"/>
    <property type="match status" value="1"/>
</dbReference>
<dbReference type="SUPFAM" id="SSF63848">
    <property type="entry name" value="Cell-division inhibitor MinC, C-terminal domain"/>
    <property type="match status" value="1"/>
</dbReference>